<gene>
    <name type="primary">cck-b</name>
</gene>
<protein>
    <recommendedName>
        <fullName>Cholecystokinin B</fullName>
    </recommendedName>
    <alternativeName>
        <fullName>Cholecystokinin type 2</fullName>
    </alternativeName>
    <component>
        <recommendedName>
            <fullName>Cholecystokinin</fullName>
            <shortName>CCK</shortName>
        </recommendedName>
    </component>
</protein>
<evidence type="ECO:0000250" key="1"/>
<evidence type="ECO:0000255" key="2"/>
<evidence type="ECO:0000256" key="3">
    <source>
        <dbReference type="SAM" id="MobiDB-lite"/>
    </source>
</evidence>
<evidence type="ECO:0000305" key="4"/>
<keyword id="KW-0027">Amidation</keyword>
<keyword id="KW-0165">Cleavage on pair of basic residues</keyword>
<keyword id="KW-0372">Hormone</keyword>
<keyword id="KW-1185">Reference proteome</keyword>
<keyword id="KW-0964">Secreted</keyword>
<keyword id="KW-0732">Signal</keyword>
<keyword id="KW-0765">Sulfation</keyword>
<reference key="1">
    <citation type="journal article" date="1995" name="J. Mol. Endocrinol.">
        <title>Structure of two cDNAs encoding cholecystokinin precursors from the brain of Xenopus laevis.</title>
        <authorList>
            <person name="Wechselberger C."/>
            <person name="Kreil G."/>
        </authorList>
    </citation>
    <scope>NUCLEOTIDE SEQUENCE [MRNA]</scope>
    <source>
        <tissue>Brain</tissue>
    </source>
</reference>
<dbReference type="EMBL" id="Z47558">
    <property type="protein sequence ID" value="CAA87639.1"/>
    <property type="molecule type" value="mRNA"/>
</dbReference>
<dbReference type="PIR" id="I51605">
    <property type="entry name" value="I51605"/>
</dbReference>
<dbReference type="RefSeq" id="NP_001079304.1">
    <property type="nucleotide sequence ID" value="NM_001085835.1"/>
</dbReference>
<dbReference type="GeneID" id="378612"/>
<dbReference type="KEGG" id="xla:378612"/>
<dbReference type="AGR" id="Xenbase:XB-GENE-865926"/>
<dbReference type="CTD" id="378612"/>
<dbReference type="Xenbase" id="XB-GENE-865926">
    <property type="gene designation" value="cck.L"/>
</dbReference>
<dbReference type="OrthoDB" id="9862982at2759"/>
<dbReference type="Proteomes" id="UP000186698">
    <property type="component" value="Chromosome 6L"/>
</dbReference>
<dbReference type="Bgee" id="378612">
    <property type="expression patterns" value="Expressed in brain and 6 other cell types or tissues"/>
</dbReference>
<dbReference type="GO" id="GO:0030424">
    <property type="term" value="C:axon"/>
    <property type="evidence" value="ECO:0000318"/>
    <property type="project" value="GO_Central"/>
</dbReference>
<dbReference type="GO" id="GO:0005615">
    <property type="term" value="C:extracellular space"/>
    <property type="evidence" value="ECO:0000318"/>
    <property type="project" value="GO_Central"/>
</dbReference>
<dbReference type="GO" id="GO:0005184">
    <property type="term" value="F:neuropeptide hormone activity"/>
    <property type="evidence" value="ECO:0000318"/>
    <property type="project" value="GO_Central"/>
</dbReference>
<dbReference type="GO" id="GO:0007586">
    <property type="term" value="P:digestion"/>
    <property type="evidence" value="ECO:0000318"/>
    <property type="project" value="GO_Central"/>
</dbReference>
<dbReference type="InterPro" id="IPR015499">
    <property type="entry name" value="CCK-like"/>
</dbReference>
<dbReference type="InterPro" id="IPR001651">
    <property type="entry name" value="Gastrin/CCK"/>
</dbReference>
<dbReference type="InterPro" id="IPR013152">
    <property type="entry name" value="Gastrin/cholecystokinin_CS"/>
</dbReference>
<dbReference type="PANTHER" id="PTHR10786">
    <property type="entry name" value="CHOLECYSTOKININ"/>
    <property type="match status" value="1"/>
</dbReference>
<dbReference type="PANTHER" id="PTHR10786:SF0">
    <property type="entry name" value="CHOLECYSTOKININ"/>
    <property type="match status" value="1"/>
</dbReference>
<dbReference type="Pfam" id="PF00918">
    <property type="entry name" value="Gastrin"/>
    <property type="match status" value="1"/>
</dbReference>
<dbReference type="SMART" id="SM00029">
    <property type="entry name" value="GASTRIN"/>
    <property type="match status" value="1"/>
</dbReference>
<dbReference type="PROSITE" id="PS00259">
    <property type="entry name" value="GASTRIN"/>
    <property type="match status" value="1"/>
</dbReference>
<accession>P50145</accession>
<organism>
    <name type="scientific">Xenopus laevis</name>
    <name type="common">African clawed frog</name>
    <dbReference type="NCBI Taxonomy" id="8355"/>
    <lineage>
        <taxon>Eukaryota</taxon>
        <taxon>Metazoa</taxon>
        <taxon>Chordata</taxon>
        <taxon>Craniata</taxon>
        <taxon>Vertebrata</taxon>
        <taxon>Euteleostomi</taxon>
        <taxon>Amphibia</taxon>
        <taxon>Batrachia</taxon>
        <taxon>Anura</taxon>
        <taxon>Pipoidea</taxon>
        <taxon>Pipidae</taxon>
        <taxon>Xenopodinae</taxon>
        <taxon>Xenopus</taxon>
        <taxon>Xenopus</taxon>
    </lineage>
</organism>
<sequence length="128" mass="14201">MCSGVCICLLLAMLSASSKAHQATGSLGEDAVGTEMDQLNLSQLPRYARASSAGQKKSFQRTDGDQRSNIGNALVKYLQQSRKAGPSGRYVVLPNRPIFDQSHRINDRDYMGWMDFGRRSAEEYEYSS</sequence>
<name>CCKNB_XENLA</name>
<comment type="subcellular location">
    <subcellularLocation>
        <location evidence="1">Secreted</location>
    </subcellularLocation>
</comment>
<comment type="tissue specificity">
    <text>Brain and gastrointestinal tract.</text>
</comment>
<comment type="PTM">
    <text evidence="1">The precursor is cleaved by proteases to produce a number of active cholecystokinins.</text>
</comment>
<comment type="similarity">
    <text evidence="4">Belongs to the gastrin/cholecystokinin family.</text>
</comment>
<proteinExistence type="evidence at transcript level"/>
<feature type="signal peptide" evidence="2">
    <location>
        <begin position="1"/>
        <end position="20"/>
    </location>
</feature>
<feature type="propeptide" id="PRO_0000010606" evidence="2">
    <location>
        <begin position="21"/>
        <end position="108"/>
    </location>
</feature>
<feature type="peptide" id="PRO_0000010607" description="Cholecystokinin">
    <location>
        <begin position="109"/>
        <end position="116"/>
    </location>
</feature>
<feature type="propeptide" id="PRO_0000010608" evidence="2">
    <location>
        <begin position="120"/>
        <end position="128"/>
    </location>
</feature>
<feature type="region of interest" description="Disordered" evidence="3">
    <location>
        <begin position="47"/>
        <end position="67"/>
    </location>
</feature>
<feature type="modified residue" description="Sulfotyrosine" evidence="1">
    <location>
        <position position="110"/>
    </location>
</feature>
<feature type="modified residue" description="Phenylalanine amide" evidence="1">
    <location>
        <position position="116"/>
    </location>
</feature>